<protein>
    <recommendedName>
        <fullName evidence="1">Fructose-1,6-bisphosphatase class 1</fullName>
        <shortName evidence="1">FBPase class 1</shortName>
        <ecNumber evidence="1">3.1.3.11</ecNumber>
    </recommendedName>
    <alternativeName>
        <fullName evidence="1">D-fructose-1,6-bisphosphate 1-phosphohydrolase class 1</fullName>
    </alternativeName>
</protein>
<name>F16PA_PECAS</name>
<keyword id="KW-0119">Carbohydrate metabolism</keyword>
<keyword id="KW-0963">Cytoplasm</keyword>
<keyword id="KW-0378">Hydrolase</keyword>
<keyword id="KW-0460">Magnesium</keyword>
<keyword id="KW-0479">Metal-binding</keyword>
<keyword id="KW-1185">Reference proteome</keyword>
<comment type="catalytic activity">
    <reaction evidence="1">
        <text>beta-D-fructose 1,6-bisphosphate + H2O = beta-D-fructose 6-phosphate + phosphate</text>
        <dbReference type="Rhea" id="RHEA:11064"/>
        <dbReference type="ChEBI" id="CHEBI:15377"/>
        <dbReference type="ChEBI" id="CHEBI:32966"/>
        <dbReference type="ChEBI" id="CHEBI:43474"/>
        <dbReference type="ChEBI" id="CHEBI:57634"/>
        <dbReference type="EC" id="3.1.3.11"/>
    </reaction>
</comment>
<comment type="cofactor">
    <cofactor evidence="1">
        <name>Mg(2+)</name>
        <dbReference type="ChEBI" id="CHEBI:18420"/>
    </cofactor>
    <text evidence="1">Binds 2 magnesium ions per subunit.</text>
</comment>
<comment type="pathway">
    <text evidence="1">Carbohydrate biosynthesis; gluconeogenesis.</text>
</comment>
<comment type="subunit">
    <text evidence="1">Homotetramer.</text>
</comment>
<comment type="subcellular location">
    <subcellularLocation>
        <location evidence="1">Cytoplasm</location>
    </subcellularLocation>
</comment>
<comment type="similarity">
    <text evidence="1">Belongs to the FBPase class 1 family.</text>
</comment>
<dbReference type="EC" id="3.1.3.11" evidence="1"/>
<dbReference type="EMBL" id="BX950851">
    <property type="protein sequence ID" value="CAG76824.1"/>
    <property type="molecule type" value="Genomic_DNA"/>
</dbReference>
<dbReference type="RefSeq" id="WP_011095423.1">
    <property type="nucleotide sequence ID" value="NC_004547.2"/>
</dbReference>
<dbReference type="SMR" id="Q6D074"/>
<dbReference type="STRING" id="218491.ECA3927"/>
<dbReference type="GeneID" id="57210541"/>
<dbReference type="KEGG" id="eca:ECA3927"/>
<dbReference type="PATRIC" id="fig|218491.5.peg.3992"/>
<dbReference type="eggNOG" id="COG0158">
    <property type="taxonomic scope" value="Bacteria"/>
</dbReference>
<dbReference type="HOGENOM" id="CLU_039977_2_2_6"/>
<dbReference type="OrthoDB" id="9806756at2"/>
<dbReference type="UniPathway" id="UPA00138"/>
<dbReference type="Proteomes" id="UP000007966">
    <property type="component" value="Chromosome"/>
</dbReference>
<dbReference type="GO" id="GO:0005829">
    <property type="term" value="C:cytosol"/>
    <property type="evidence" value="ECO:0007669"/>
    <property type="project" value="TreeGrafter"/>
</dbReference>
<dbReference type="GO" id="GO:0042132">
    <property type="term" value="F:fructose 1,6-bisphosphate 1-phosphatase activity"/>
    <property type="evidence" value="ECO:0007669"/>
    <property type="project" value="UniProtKB-UniRule"/>
</dbReference>
<dbReference type="GO" id="GO:0000287">
    <property type="term" value="F:magnesium ion binding"/>
    <property type="evidence" value="ECO:0007669"/>
    <property type="project" value="UniProtKB-UniRule"/>
</dbReference>
<dbReference type="GO" id="GO:0030388">
    <property type="term" value="P:fructose 1,6-bisphosphate metabolic process"/>
    <property type="evidence" value="ECO:0007669"/>
    <property type="project" value="TreeGrafter"/>
</dbReference>
<dbReference type="GO" id="GO:0006002">
    <property type="term" value="P:fructose 6-phosphate metabolic process"/>
    <property type="evidence" value="ECO:0007669"/>
    <property type="project" value="TreeGrafter"/>
</dbReference>
<dbReference type="GO" id="GO:0006000">
    <property type="term" value="P:fructose metabolic process"/>
    <property type="evidence" value="ECO:0007669"/>
    <property type="project" value="TreeGrafter"/>
</dbReference>
<dbReference type="GO" id="GO:0006094">
    <property type="term" value="P:gluconeogenesis"/>
    <property type="evidence" value="ECO:0007669"/>
    <property type="project" value="UniProtKB-UniRule"/>
</dbReference>
<dbReference type="GO" id="GO:0005986">
    <property type="term" value="P:sucrose biosynthetic process"/>
    <property type="evidence" value="ECO:0007669"/>
    <property type="project" value="TreeGrafter"/>
</dbReference>
<dbReference type="CDD" id="cd00354">
    <property type="entry name" value="FBPase"/>
    <property type="match status" value="1"/>
</dbReference>
<dbReference type="FunFam" id="3.30.540.10:FF:000002">
    <property type="entry name" value="Fructose-1,6-bisphosphatase class 1"/>
    <property type="match status" value="1"/>
</dbReference>
<dbReference type="FunFam" id="3.40.190.80:FF:000001">
    <property type="entry name" value="Fructose-1,6-bisphosphatase class 1"/>
    <property type="match status" value="1"/>
</dbReference>
<dbReference type="Gene3D" id="3.40.190.80">
    <property type="match status" value="1"/>
</dbReference>
<dbReference type="Gene3D" id="3.30.540.10">
    <property type="entry name" value="Fructose-1,6-Bisphosphatase, subunit A, domain 1"/>
    <property type="match status" value="1"/>
</dbReference>
<dbReference type="HAMAP" id="MF_01855">
    <property type="entry name" value="FBPase_class1"/>
    <property type="match status" value="1"/>
</dbReference>
<dbReference type="InterPro" id="IPR044015">
    <property type="entry name" value="FBPase_C_dom"/>
</dbReference>
<dbReference type="InterPro" id="IPR000146">
    <property type="entry name" value="FBPase_class-1"/>
</dbReference>
<dbReference type="InterPro" id="IPR033391">
    <property type="entry name" value="FBPase_N"/>
</dbReference>
<dbReference type="InterPro" id="IPR028343">
    <property type="entry name" value="FBPtase"/>
</dbReference>
<dbReference type="InterPro" id="IPR020548">
    <property type="entry name" value="Fructose_bisphosphatase_AS"/>
</dbReference>
<dbReference type="NCBIfam" id="NF006778">
    <property type="entry name" value="PRK09293.1-1"/>
    <property type="match status" value="1"/>
</dbReference>
<dbReference type="NCBIfam" id="NF006779">
    <property type="entry name" value="PRK09293.1-3"/>
    <property type="match status" value="1"/>
</dbReference>
<dbReference type="PANTHER" id="PTHR11556">
    <property type="entry name" value="FRUCTOSE-1,6-BISPHOSPHATASE-RELATED"/>
    <property type="match status" value="1"/>
</dbReference>
<dbReference type="PANTHER" id="PTHR11556:SF35">
    <property type="entry name" value="SEDOHEPTULOSE-1,7-BISPHOSPHATASE, CHLOROPLASTIC"/>
    <property type="match status" value="1"/>
</dbReference>
<dbReference type="Pfam" id="PF00316">
    <property type="entry name" value="FBPase"/>
    <property type="match status" value="1"/>
</dbReference>
<dbReference type="Pfam" id="PF18913">
    <property type="entry name" value="FBPase_C"/>
    <property type="match status" value="1"/>
</dbReference>
<dbReference type="PIRSF" id="PIRSF500210">
    <property type="entry name" value="FBPtase"/>
    <property type="match status" value="1"/>
</dbReference>
<dbReference type="PIRSF" id="PIRSF000904">
    <property type="entry name" value="FBPtase_SBPase"/>
    <property type="match status" value="1"/>
</dbReference>
<dbReference type="PRINTS" id="PR00115">
    <property type="entry name" value="F16BPHPHTASE"/>
</dbReference>
<dbReference type="SUPFAM" id="SSF56655">
    <property type="entry name" value="Carbohydrate phosphatase"/>
    <property type="match status" value="1"/>
</dbReference>
<dbReference type="PROSITE" id="PS00124">
    <property type="entry name" value="FBPASE"/>
    <property type="match status" value="1"/>
</dbReference>
<proteinExistence type="inferred from homology"/>
<feature type="chain" id="PRO_0000364543" description="Fructose-1,6-bisphosphatase class 1">
    <location>
        <begin position="1"/>
        <end position="334"/>
    </location>
</feature>
<feature type="binding site" evidence="1">
    <location>
        <position position="89"/>
    </location>
    <ligand>
        <name>Mg(2+)</name>
        <dbReference type="ChEBI" id="CHEBI:18420"/>
        <label>1</label>
    </ligand>
</feature>
<feature type="binding site" evidence="1">
    <location>
        <position position="112"/>
    </location>
    <ligand>
        <name>Mg(2+)</name>
        <dbReference type="ChEBI" id="CHEBI:18420"/>
        <label>1</label>
    </ligand>
</feature>
<feature type="binding site" evidence="1">
    <location>
        <position position="112"/>
    </location>
    <ligand>
        <name>Mg(2+)</name>
        <dbReference type="ChEBI" id="CHEBI:18420"/>
        <label>2</label>
    </ligand>
</feature>
<feature type="binding site" evidence="1">
    <location>
        <position position="114"/>
    </location>
    <ligand>
        <name>Mg(2+)</name>
        <dbReference type="ChEBI" id="CHEBI:18420"/>
        <label>1</label>
    </ligand>
</feature>
<feature type="binding site" evidence="1">
    <location>
        <begin position="115"/>
        <end position="118"/>
    </location>
    <ligand>
        <name>substrate</name>
    </ligand>
</feature>
<feature type="binding site" evidence="1">
    <location>
        <position position="115"/>
    </location>
    <ligand>
        <name>Mg(2+)</name>
        <dbReference type="ChEBI" id="CHEBI:18420"/>
        <label>2</label>
    </ligand>
</feature>
<feature type="binding site" evidence="1">
    <location>
        <position position="208"/>
    </location>
    <ligand>
        <name>substrate</name>
    </ligand>
</feature>
<feature type="binding site" evidence="1">
    <location>
        <position position="241"/>
    </location>
    <ligand>
        <name>substrate</name>
    </ligand>
</feature>
<feature type="binding site" evidence="1">
    <location>
        <begin position="259"/>
        <end position="261"/>
    </location>
    <ligand>
        <name>substrate</name>
    </ligand>
</feature>
<feature type="binding site" evidence="1">
    <location>
        <position position="271"/>
    </location>
    <ligand>
        <name>substrate</name>
    </ligand>
</feature>
<feature type="binding site" evidence="1">
    <location>
        <position position="277"/>
    </location>
    <ligand>
        <name>Mg(2+)</name>
        <dbReference type="ChEBI" id="CHEBI:18420"/>
        <label>2</label>
    </ligand>
</feature>
<gene>
    <name evidence="1" type="primary">fbp</name>
    <name type="ordered locus">ECA3927</name>
</gene>
<accession>Q6D074</accession>
<organism>
    <name type="scientific">Pectobacterium atrosepticum (strain SCRI 1043 / ATCC BAA-672)</name>
    <name type="common">Erwinia carotovora subsp. atroseptica</name>
    <dbReference type="NCBI Taxonomy" id="218491"/>
    <lineage>
        <taxon>Bacteria</taxon>
        <taxon>Pseudomonadati</taxon>
        <taxon>Pseudomonadota</taxon>
        <taxon>Gammaproteobacteria</taxon>
        <taxon>Enterobacterales</taxon>
        <taxon>Pectobacteriaceae</taxon>
        <taxon>Pectobacterium</taxon>
    </lineage>
</organism>
<reference key="1">
    <citation type="journal article" date="2004" name="Proc. Natl. Acad. Sci. U.S.A.">
        <title>Genome sequence of the enterobacterial phytopathogen Erwinia carotovora subsp. atroseptica and characterization of virulence factors.</title>
        <authorList>
            <person name="Bell K.S."/>
            <person name="Sebaihia M."/>
            <person name="Pritchard L."/>
            <person name="Holden M.T.G."/>
            <person name="Hyman L.J."/>
            <person name="Holeva M.C."/>
            <person name="Thomson N.R."/>
            <person name="Bentley S.D."/>
            <person name="Churcher L.J.C."/>
            <person name="Mungall K."/>
            <person name="Atkin R."/>
            <person name="Bason N."/>
            <person name="Brooks K."/>
            <person name="Chillingworth T."/>
            <person name="Clark K."/>
            <person name="Doggett J."/>
            <person name="Fraser A."/>
            <person name="Hance Z."/>
            <person name="Hauser H."/>
            <person name="Jagels K."/>
            <person name="Moule S."/>
            <person name="Norbertczak H."/>
            <person name="Ormond D."/>
            <person name="Price C."/>
            <person name="Quail M.A."/>
            <person name="Sanders M."/>
            <person name="Walker D."/>
            <person name="Whitehead S."/>
            <person name="Salmond G.P.C."/>
            <person name="Birch P.R.J."/>
            <person name="Parkhill J."/>
            <person name="Toth I.K."/>
        </authorList>
    </citation>
    <scope>NUCLEOTIDE SEQUENCE [LARGE SCALE GENOMIC DNA]</scope>
    <source>
        <strain>SCRI 1043 / ATCC BAA-672</strain>
    </source>
</reference>
<evidence type="ECO:0000255" key="1">
    <source>
        <dbReference type="HAMAP-Rule" id="MF_01855"/>
    </source>
</evidence>
<sequence length="334" mass="36861">MKTLGEFIVEKQHDFSHATGELTALLSAIKLGAKIIHRDINKAGLVDILGASGISNVQGEVQMKLDLYANEKLKAALKARGEVAGIASEEEDEIVIFEGDKAENAKYVVLMDPLDGSSNIDVNVSVGTIFSIYRRITPLGTSVTEADFLQPGSQQVAAGYIVYGSSTMLVYTTGHGVHAFTYDPSLGVFCLSHEKVCFPEKGNMYSINEGNYIKFPSGVKKYIKYCQEQDEETQRPYTSRYIGSLVADFHRNLLKGGIYLYPSTASYPKGKLRLLYECNPMAFLAEQAGGKASDGKHRILDITPEKLHQRSPFFVGTESMVDDVERFIREFPDA</sequence>